<comment type="function">
    <text evidence="1">One of the primary rRNA binding proteins, this protein initially binds near the 5'-end of the 23S rRNA. It is important during the early stages of 50S assembly. It makes multiple contacts with different domains of the 23S rRNA in the assembled 50S subunit and ribosome.</text>
</comment>
<comment type="function">
    <text evidence="1">Forms part of the polypeptide exit tunnel.</text>
</comment>
<comment type="subunit">
    <text evidence="1">Part of the 50S ribosomal subunit.</text>
</comment>
<comment type="similarity">
    <text evidence="1">Belongs to the universal ribosomal protein uL4 family.</text>
</comment>
<dbReference type="EMBL" id="CP000943">
    <property type="protein sequence ID" value="ACA14923.1"/>
    <property type="molecule type" value="Genomic_DNA"/>
</dbReference>
<dbReference type="RefSeq" id="WP_012330341.1">
    <property type="nucleotide sequence ID" value="NC_010511.1"/>
</dbReference>
<dbReference type="SMR" id="B0UHW8"/>
<dbReference type="STRING" id="426117.M446_0352"/>
<dbReference type="KEGG" id="met:M446_0352"/>
<dbReference type="eggNOG" id="COG0088">
    <property type="taxonomic scope" value="Bacteria"/>
</dbReference>
<dbReference type="HOGENOM" id="CLU_041575_5_1_5"/>
<dbReference type="GO" id="GO:1990904">
    <property type="term" value="C:ribonucleoprotein complex"/>
    <property type="evidence" value="ECO:0007669"/>
    <property type="project" value="UniProtKB-KW"/>
</dbReference>
<dbReference type="GO" id="GO:0005840">
    <property type="term" value="C:ribosome"/>
    <property type="evidence" value="ECO:0007669"/>
    <property type="project" value="UniProtKB-KW"/>
</dbReference>
<dbReference type="GO" id="GO:0019843">
    <property type="term" value="F:rRNA binding"/>
    <property type="evidence" value="ECO:0007669"/>
    <property type="project" value="UniProtKB-UniRule"/>
</dbReference>
<dbReference type="GO" id="GO:0003735">
    <property type="term" value="F:structural constituent of ribosome"/>
    <property type="evidence" value="ECO:0007669"/>
    <property type="project" value="InterPro"/>
</dbReference>
<dbReference type="GO" id="GO:0006412">
    <property type="term" value="P:translation"/>
    <property type="evidence" value="ECO:0007669"/>
    <property type="project" value="UniProtKB-UniRule"/>
</dbReference>
<dbReference type="Gene3D" id="3.40.1370.10">
    <property type="match status" value="1"/>
</dbReference>
<dbReference type="HAMAP" id="MF_01328_B">
    <property type="entry name" value="Ribosomal_uL4_B"/>
    <property type="match status" value="1"/>
</dbReference>
<dbReference type="InterPro" id="IPR002136">
    <property type="entry name" value="Ribosomal_uL4"/>
</dbReference>
<dbReference type="InterPro" id="IPR013005">
    <property type="entry name" value="Ribosomal_uL4-like"/>
</dbReference>
<dbReference type="InterPro" id="IPR023574">
    <property type="entry name" value="Ribosomal_uL4_dom_sf"/>
</dbReference>
<dbReference type="NCBIfam" id="TIGR03953">
    <property type="entry name" value="rplD_bact"/>
    <property type="match status" value="1"/>
</dbReference>
<dbReference type="PANTHER" id="PTHR10746">
    <property type="entry name" value="50S RIBOSOMAL PROTEIN L4"/>
    <property type="match status" value="1"/>
</dbReference>
<dbReference type="PANTHER" id="PTHR10746:SF6">
    <property type="entry name" value="LARGE RIBOSOMAL SUBUNIT PROTEIN UL4M"/>
    <property type="match status" value="1"/>
</dbReference>
<dbReference type="Pfam" id="PF00573">
    <property type="entry name" value="Ribosomal_L4"/>
    <property type="match status" value="1"/>
</dbReference>
<dbReference type="SUPFAM" id="SSF52166">
    <property type="entry name" value="Ribosomal protein L4"/>
    <property type="match status" value="1"/>
</dbReference>
<name>RL4_METS4</name>
<protein>
    <recommendedName>
        <fullName evidence="1">Large ribosomal subunit protein uL4</fullName>
    </recommendedName>
    <alternativeName>
        <fullName evidence="3">50S ribosomal protein L4</fullName>
    </alternativeName>
</protein>
<keyword id="KW-0687">Ribonucleoprotein</keyword>
<keyword id="KW-0689">Ribosomal protein</keyword>
<keyword id="KW-0694">RNA-binding</keyword>
<keyword id="KW-0699">rRNA-binding</keyword>
<evidence type="ECO:0000255" key="1">
    <source>
        <dbReference type="HAMAP-Rule" id="MF_01328"/>
    </source>
</evidence>
<evidence type="ECO:0000256" key="2">
    <source>
        <dbReference type="SAM" id="MobiDB-lite"/>
    </source>
</evidence>
<evidence type="ECO:0000305" key="3"/>
<accession>B0UHW8</accession>
<feature type="chain" id="PRO_1000142156" description="Large ribosomal subunit protein uL4">
    <location>
        <begin position="1"/>
        <end position="206"/>
    </location>
</feature>
<feature type="region of interest" description="Disordered" evidence="2">
    <location>
        <begin position="49"/>
        <end position="79"/>
    </location>
</feature>
<reference key="1">
    <citation type="submission" date="2008-02" db="EMBL/GenBank/DDBJ databases">
        <title>Complete sequence of chromosome of Methylobacterium sp. 4-46.</title>
        <authorList>
            <consortium name="US DOE Joint Genome Institute"/>
            <person name="Copeland A."/>
            <person name="Lucas S."/>
            <person name="Lapidus A."/>
            <person name="Glavina del Rio T."/>
            <person name="Dalin E."/>
            <person name="Tice H."/>
            <person name="Bruce D."/>
            <person name="Goodwin L."/>
            <person name="Pitluck S."/>
            <person name="Chertkov O."/>
            <person name="Brettin T."/>
            <person name="Detter J.C."/>
            <person name="Han C."/>
            <person name="Kuske C.R."/>
            <person name="Schmutz J."/>
            <person name="Larimer F."/>
            <person name="Land M."/>
            <person name="Hauser L."/>
            <person name="Kyrpides N."/>
            <person name="Ivanova N."/>
            <person name="Marx C.J."/>
            <person name="Richardson P."/>
        </authorList>
    </citation>
    <scope>NUCLEOTIDE SEQUENCE [LARGE SCALE GENOMIC DNA]</scope>
    <source>
        <strain>4-46</strain>
    </source>
</reference>
<proteinExistence type="inferred from homology"/>
<sequence>MKFEITTLDGGEAGSVEVNEAIFGLEPRADLLQRCVRWQLAKRQAGTHKVKTRSEISRTTKKMYKQKGTGNARHGAASAPQFRGGARAFGPVVRSHAHDLPKKVRALALRHALSAKARAASLVVVDDVRLEDGKTKALKDRFGALGWSNALIIGGAEVDENFGRAARNLPSIDVLPVQGINVYDILRRDKLVLTRAAVDALEARFK</sequence>
<gene>
    <name evidence="1" type="primary">rplD</name>
    <name type="ordered locus">M446_0352</name>
</gene>
<organism>
    <name type="scientific">Methylobacterium sp. (strain 4-46)</name>
    <dbReference type="NCBI Taxonomy" id="426117"/>
    <lineage>
        <taxon>Bacteria</taxon>
        <taxon>Pseudomonadati</taxon>
        <taxon>Pseudomonadota</taxon>
        <taxon>Alphaproteobacteria</taxon>
        <taxon>Hyphomicrobiales</taxon>
        <taxon>Methylobacteriaceae</taxon>
        <taxon>Methylobacterium</taxon>
    </lineage>
</organism>